<organism>
    <name type="scientific">Schizosaccharomyces pombe (strain 972 / ATCC 24843)</name>
    <name type="common">Fission yeast</name>
    <dbReference type="NCBI Taxonomy" id="284812"/>
    <lineage>
        <taxon>Eukaryota</taxon>
        <taxon>Fungi</taxon>
        <taxon>Dikarya</taxon>
        <taxon>Ascomycota</taxon>
        <taxon>Taphrinomycotina</taxon>
        <taxon>Schizosaccharomycetes</taxon>
        <taxon>Schizosaccharomycetales</taxon>
        <taxon>Schizosaccharomycetaceae</taxon>
        <taxon>Schizosaccharomyces</taxon>
    </lineage>
</organism>
<comment type="function">
    <text evidence="1">Centromeric protein that plays a central role in the incorporation and maintenance of histone H3-like variant CENPA at centromeres.</text>
</comment>
<comment type="subcellular location">
    <subcellularLocation>
        <location evidence="3">Cytoplasm</location>
    </subcellularLocation>
    <subcellularLocation>
        <location evidence="3">Nucleus</location>
    </subcellularLocation>
</comment>
<accession>Q9HDY7</accession>
<sequence length="336" mass="37694">MCNRQPKAVDLPPNYSCPHLLSFQSVEFNTNPTACDDVFCKRIESEKKYNDFLESLFKKYGRDTSDIADEVDLATGEIIVNNGHLEALKTKDDIWDPTFNNLEISASNGYEKKLDSSIGNPGEKAVSPVHIEDFQSPQIYKFKNLSLRDEMVSDCVFADEVPLASLFVENVCNETIPSQSCVRLKINDKTRKVDASALEKKSCLLPNSSGTLTDQRGLDTIKHKSIEQNEILHVISDTLSSPRRRNPLLSSPKTPLRRSFSKSKVRNSNSTKRRNFISLISMISPRPNLSTHHFNLGFQPLSQQTSFSGSSTQNPHSSSTCKKAFCFQCISESKKC</sequence>
<feature type="chain" id="PRO_0000350767" description="CENP-A histone chaperone scm3">
    <location>
        <begin position="1"/>
        <end position="336"/>
    </location>
</feature>
<feature type="region of interest" description="Disordered" evidence="2">
    <location>
        <begin position="243"/>
        <end position="269"/>
    </location>
</feature>
<feature type="compositionally biased region" description="Basic residues" evidence="2">
    <location>
        <begin position="255"/>
        <end position="269"/>
    </location>
</feature>
<reference key="1">
    <citation type="journal article" date="2002" name="Nature">
        <title>The genome sequence of Schizosaccharomyces pombe.</title>
        <authorList>
            <person name="Wood V."/>
            <person name="Gwilliam R."/>
            <person name="Rajandream M.A."/>
            <person name="Lyne M.H."/>
            <person name="Lyne R."/>
            <person name="Stewart A."/>
            <person name="Sgouros J.G."/>
            <person name="Peat N."/>
            <person name="Hayles J."/>
            <person name="Baker S.G."/>
            <person name="Basham D."/>
            <person name="Bowman S."/>
            <person name="Brooks K."/>
            <person name="Brown D."/>
            <person name="Brown S."/>
            <person name="Chillingworth T."/>
            <person name="Churcher C.M."/>
            <person name="Collins M."/>
            <person name="Connor R."/>
            <person name="Cronin A."/>
            <person name="Davis P."/>
            <person name="Feltwell T."/>
            <person name="Fraser A."/>
            <person name="Gentles S."/>
            <person name="Goble A."/>
            <person name="Hamlin N."/>
            <person name="Harris D.E."/>
            <person name="Hidalgo J."/>
            <person name="Hodgson G."/>
            <person name="Holroyd S."/>
            <person name="Hornsby T."/>
            <person name="Howarth S."/>
            <person name="Huckle E.J."/>
            <person name="Hunt S."/>
            <person name="Jagels K."/>
            <person name="James K.D."/>
            <person name="Jones L."/>
            <person name="Jones M."/>
            <person name="Leather S."/>
            <person name="McDonald S."/>
            <person name="McLean J."/>
            <person name="Mooney P."/>
            <person name="Moule S."/>
            <person name="Mungall K.L."/>
            <person name="Murphy L.D."/>
            <person name="Niblett D."/>
            <person name="Odell C."/>
            <person name="Oliver K."/>
            <person name="O'Neil S."/>
            <person name="Pearson D."/>
            <person name="Quail M.A."/>
            <person name="Rabbinowitsch E."/>
            <person name="Rutherford K.M."/>
            <person name="Rutter S."/>
            <person name="Saunders D."/>
            <person name="Seeger K."/>
            <person name="Sharp S."/>
            <person name="Skelton J."/>
            <person name="Simmonds M.N."/>
            <person name="Squares R."/>
            <person name="Squares S."/>
            <person name="Stevens K."/>
            <person name="Taylor K."/>
            <person name="Taylor R.G."/>
            <person name="Tivey A."/>
            <person name="Walsh S.V."/>
            <person name="Warren T."/>
            <person name="Whitehead S."/>
            <person name="Woodward J.R."/>
            <person name="Volckaert G."/>
            <person name="Aert R."/>
            <person name="Robben J."/>
            <person name="Grymonprez B."/>
            <person name="Weltjens I."/>
            <person name="Vanstreels E."/>
            <person name="Rieger M."/>
            <person name="Schaefer M."/>
            <person name="Mueller-Auer S."/>
            <person name="Gabel C."/>
            <person name="Fuchs M."/>
            <person name="Duesterhoeft A."/>
            <person name="Fritzc C."/>
            <person name="Holzer E."/>
            <person name="Moestl D."/>
            <person name="Hilbert H."/>
            <person name="Borzym K."/>
            <person name="Langer I."/>
            <person name="Beck A."/>
            <person name="Lehrach H."/>
            <person name="Reinhardt R."/>
            <person name="Pohl T.M."/>
            <person name="Eger P."/>
            <person name="Zimmermann W."/>
            <person name="Wedler H."/>
            <person name="Wambutt R."/>
            <person name="Purnelle B."/>
            <person name="Goffeau A."/>
            <person name="Cadieu E."/>
            <person name="Dreano S."/>
            <person name="Gloux S."/>
            <person name="Lelaure V."/>
            <person name="Mottier S."/>
            <person name="Galibert F."/>
            <person name="Aves S.J."/>
            <person name="Xiang Z."/>
            <person name="Hunt C."/>
            <person name="Moore K."/>
            <person name="Hurst S.M."/>
            <person name="Lucas M."/>
            <person name="Rochet M."/>
            <person name="Gaillardin C."/>
            <person name="Tallada V.A."/>
            <person name="Garzon A."/>
            <person name="Thode G."/>
            <person name="Daga R.R."/>
            <person name="Cruzado L."/>
            <person name="Jimenez J."/>
            <person name="Sanchez M."/>
            <person name="del Rey F."/>
            <person name="Benito J."/>
            <person name="Dominguez A."/>
            <person name="Revuelta J.L."/>
            <person name="Moreno S."/>
            <person name="Armstrong J."/>
            <person name="Forsburg S.L."/>
            <person name="Cerutti L."/>
            <person name="Lowe T."/>
            <person name="McCombie W.R."/>
            <person name="Paulsen I."/>
            <person name="Potashkin J."/>
            <person name="Shpakovski G.V."/>
            <person name="Ussery D."/>
            <person name="Barrell B.G."/>
            <person name="Nurse P."/>
        </authorList>
    </citation>
    <scope>NUCLEOTIDE SEQUENCE [LARGE SCALE GENOMIC DNA]</scope>
    <source>
        <strain>972 / ATCC 24843</strain>
    </source>
</reference>
<reference key="2">
    <citation type="journal article" date="2006" name="Nat. Biotechnol.">
        <title>ORFeome cloning and global analysis of protein localization in the fission yeast Schizosaccharomyces pombe.</title>
        <authorList>
            <person name="Matsuyama A."/>
            <person name="Arai R."/>
            <person name="Yashiroda Y."/>
            <person name="Shirai A."/>
            <person name="Kamata A."/>
            <person name="Sekido S."/>
            <person name="Kobayashi Y."/>
            <person name="Hashimoto A."/>
            <person name="Hamamoto M."/>
            <person name="Hiraoka Y."/>
            <person name="Horinouchi S."/>
            <person name="Yoshida M."/>
        </authorList>
    </citation>
    <scope>SUBCELLULAR LOCATION [LARGE SCALE ANALYSIS]</scope>
</reference>
<keyword id="KW-0963">Cytoplasm</keyword>
<keyword id="KW-0539">Nucleus</keyword>
<keyword id="KW-1185">Reference proteome</keyword>
<gene>
    <name evidence="4" type="primary">scm3</name>
    <name type="ORF">SPAPB1A10.02</name>
</gene>
<evidence type="ECO:0000250" key="1">
    <source>
        <dbReference type="UniProtKB" id="Q8NCD3"/>
    </source>
</evidence>
<evidence type="ECO:0000256" key="2">
    <source>
        <dbReference type="SAM" id="MobiDB-lite"/>
    </source>
</evidence>
<evidence type="ECO:0000269" key="3">
    <source>
    </source>
</evidence>
<evidence type="ECO:0000312" key="4">
    <source>
        <dbReference type="PomBase" id="SPAPB1A10.02"/>
    </source>
</evidence>
<dbReference type="EMBL" id="CU329670">
    <property type="protein sequence ID" value="CAC21475.1"/>
    <property type="molecule type" value="Genomic_DNA"/>
</dbReference>
<dbReference type="RefSeq" id="NP_593516.1">
    <property type="nucleotide sequence ID" value="NM_001018950.2"/>
</dbReference>
<dbReference type="BioGRID" id="279869">
    <property type="interactions" value="18"/>
</dbReference>
<dbReference type="STRING" id="284812.Q9HDY7"/>
<dbReference type="iPTMnet" id="Q9HDY7"/>
<dbReference type="PaxDb" id="4896-SPAPB1A10.02.1"/>
<dbReference type="EnsemblFungi" id="SPAPB1A10.02.1">
    <property type="protein sequence ID" value="SPAPB1A10.02.1:pep"/>
    <property type="gene ID" value="SPAPB1A10.02"/>
</dbReference>
<dbReference type="GeneID" id="2543449"/>
<dbReference type="KEGG" id="spo:2543449"/>
<dbReference type="PomBase" id="SPAPB1A10.02">
    <property type="gene designation" value="scm3"/>
</dbReference>
<dbReference type="VEuPathDB" id="FungiDB:SPAPB1A10.02"/>
<dbReference type="eggNOG" id="ENOG502SCHT">
    <property type="taxonomic scope" value="Eukaryota"/>
</dbReference>
<dbReference type="HOGENOM" id="CLU_740003_0_0_1"/>
<dbReference type="InParanoid" id="Q9HDY7"/>
<dbReference type="OMA" id="CFQCISE"/>
<dbReference type="PRO" id="PR:Q9HDY7"/>
<dbReference type="Proteomes" id="UP000002485">
    <property type="component" value="Chromosome I"/>
</dbReference>
<dbReference type="GO" id="GO:0034506">
    <property type="term" value="C:chromosome, centromeric core domain"/>
    <property type="evidence" value="ECO:0000314"/>
    <property type="project" value="PomBase"/>
</dbReference>
<dbReference type="GO" id="GO:0000775">
    <property type="term" value="C:chromosome, centromeric region"/>
    <property type="evidence" value="ECO:0000314"/>
    <property type="project" value="PomBase"/>
</dbReference>
<dbReference type="GO" id="GO:0005829">
    <property type="term" value="C:cytosol"/>
    <property type="evidence" value="ECO:0007005"/>
    <property type="project" value="PomBase"/>
</dbReference>
<dbReference type="GO" id="GO:0005634">
    <property type="term" value="C:nucleus"/>
    <property type="evidence" value="ECO:0007005"/>
    <property type="project" value="PomBase"/>
</dbReference>
<dbReference type="GO" id="GO:0042393">
    <property type="term" value="F:histone binding"/>
    <property type="evidence" value="ECO:0000353"/>
    <property type="project" value="PomBase"/>
</dbReference>
<dbReference type="GO" id="GO:0140713">
    <property type="term" value="F:histone chaperone activity"/>
    <property type="evidence" value="ECO:0000303"/>
    <property type="project" value="PomBase"/>
</dbReference>
<dbReference type="GO" id="GO:0046982">
    <property type="term" value="F:protein heterodimerization activity"/>
    <property type="evidence" value="ECO:0007669"/>
    <property type="project" value="InterPro"/>
</dbReference>
<dbReference type="GO" id="GO:0034080">
    <property type="term" value="P:CENP-A containing chromatin assembly"/>
    <property type="evidence" value="ECO:0000315"/>
    <property type="project" value="PomBase"/>
</dbReference>
<dbReference type="Gene3D" id="1.10.20.10">
    <property type="entry name" value="Histone, subunit A"/>
    <property type="match status" value="1"/>
</dbReference>
<dbReference type="InterPro" id="IPR009072">
    <property type="entry name" value="Histone-fold"/>
</dbReference>
<dbReference type="InterPro" id="IPR018465">
    <property type="entry name" value="Scm3/HJURP"/>
</dbReference>
<dbReference type="Pfam" id="PF10384">
    <property type="entry name" value="Scm3"/>
    <property type="match status" value="1"/>
</dbReference>
<proteinExistence type="inferred from homology"/>
<protein>
    <recommendedName>
        <fullName evidence="4">CENP-A histone chaperone scm3</fullName>
    </recommendedName>
</protein>
<name>SCM3_SCHPO</name>